<accession>Q2VZK3</accession>
<dbReference type="EC" id="2.7.7.38" evidence="1"/>
<dbReference type="EMBL" id="AP007255">
    <property type="protein sequence ID" value="BAE52972.1"/>
    <property type="molecule type" value="Genomic_DNA"/>
</dbReference>
<dbReference type="RefSeq" id="WP_011386517.1">
    <property type="nucleotide sequence ID" value="NC_007626.1"/>
</dbReference>
<dbReference type="SMR" id="Q2VZK3"/>
<dbReference type="STRING" id="342108.amb4168"/>
<dbReference type="KEGG" id="mag:amb4168"/>
<dbReference type="HOGENOM" id="CLU_065038_0_1_5"/>
<dbReference type="OrthoDB" id="9815559at2"/>
<dbReference type="UniPathway" id="UPA00030"/>
<dbReference type="UniPathway" id="UPA00358">
    <property type="reaction ID" value="UER00476"/>
</dbReference>
<dbReference type="Proteomes" id="UP000007058">
    <property type="component" value="Chromosome"/>
</dbReference>
<dbReference type="GO" id="GO:0005829">
    <property type="term" value="C:cytosol"/>
    <property type="evidence" value="ECO:0007669"/>
    <property type="project" value="TreeGrafter"/>
</dbReference>
<dbReference type="GO" id="GO:0008690">
    <property type="term" value="F:3-deoxy-manno-octulosonate cytidylyltransferase activity"/>
    <property type="evidence" value="ECO:0007669"/>
    <property type="project" value="UniProtKB-UniRule"/>
</dbReference>
<dbReference type="GO" id="GO:0033468">
    <property type="term" value="P:CMP-keto-3-deoxy-D-manno-octulosonic acid biosynthetic process"/>
    <property type="evidence" value="ECO:0007669"/>
    <property type="project" value="UniProtKB-UniRule"/>
</dbReference>
<dbReference type="GO" id="GO:0009103">
    <property type="term" value="P:lipopolysaccharide biosynthetic process"/>
    <property type="evidence" value="ECO:0007669"/>
    <property type="project" value="UniProtKB-UniRule"/>
</dbReference>
<dbReference type="CDD" id="cd02517">
    <property type="entry name" value="CMP-KDO-Synthetase"/>
    <property type="match status" value="1"/>
</dbReference>
<dbReference type="Gene3D" id="3.90.550.10">
    <property type="entry name" value="Spore Coat Polysaccharide Biosynthesis Protein SpsA, Chain A"/>
    <property type="match status" value="1"/>
</dbReference>
<dbReference type="HAMAP" id="MF_00057">
    <property type="entry name" value="KdsB"/>
    <property type="match status" value="1"/>
</dbReference>
<dbReference type="InterPro" id="IPR003329">
    <property type="entry name" value="Cytidylyl_trans"/>
</dbReference>
<dbReference type="InterPro" id="IPR004528">
    <property type="entry name" value="KdsB"/>
</dbReference>
<dbReference type="InterPro" id="IPR029044">
    <property type="entry name" value="Nucleotide-diphossugar_trans"/>
</dbReference>
<dbReference type="NCBIfam" id="TIGR00466">
    <property type="entry name" value="kdsB"/>
    <property type="match status" value="1"/>
</dbReference>
<dbReference type="NCBIfam" id="NF003948">
    <property type="entry name" value="PRK05450.1-1"/>
    <property type="match status" value="1"/>
</dbReference>
<dbReference type="NCBIfam" id="NF003952">
    <property type="entry name" value="PRK05450.1-5"/>
    <property type="match status" value="1"/>
</dbReference>
<dbReference type="PANTHER" id="PTHR42866">
    <property type="entry name" value="3-DEOXY-MANNO-OCTULOSONATE CYTIDYLYLTRANSFERASE"/>
    <property type="match status" value="1"/>
</dbReference>
<dbReference type="PANTHER" id="PTHR42866:SF2">
    <property type="entry name" value="3-DEOXY-MANNO-OCTULOSONATE CYTIDYLYLTRANSFERASE, MITOCHONDRIAL"/>
    <property type="match status" value="1"/>
</dbReference>
<dbReference type="Pfam" id="PF02348">
    <property type="entry name" value="CTP_transf_3"/>
    <property type="match status" value="1"/>
</dbReference>
<dbReference type="SUPFAM" id="SSF53448">
    <property type="entry name" value="Nucleotide-diphospho-sugar transferases"/>
    <property type="match status" value="1"/>
</dbReference>
<proteinExistence type="inferred from homology"/>
<keyword id="KW-0963">Cytoplasm</keyword>
<keyword id="KW-0448">Lipopolysaccharide biosynthesis</keyword>
<keyword id="KW-0548">Nucleotidyltransferase</keyword>
<keyword id="KW-0808">Transferase</keyword>
<name>KDSB_PARM1</name>
<feature type="chain" id="PRO_0000370090" description="3-deoxy-manno-octulosonate cytidylyltransferase">
    <location>
        <begin position="1"/>
        <end position="246"/>
    </location>
</feature>
<organism>
    <name type="scientific">Paramagnetospirillum magneticum (strain ATCC 700264 / AMB-1)</name>
    <name type="common">Magnetospirillum magneticum</name>
    <dbReference type="NCBI Taxonomy" id="342108"/>
    <lineage>
        <taxon>Bacteria</taxon>
        <taxon>Pseudomonadati</taxon>
        <taxon>Pseudomonadota</taxon>
        <taxon>Alphaproteobacteria</taxon>
        <taxon>Rhodospirillales</taxon>
        <taxon>Magnetospirillaceae</taxon>
        <taxon>Paramagnetospirillum</taxon>
    </lineage>
</organism>
<sequence length="246" mass="26795">MAELTPIIVIPARMQATRLPGKPLADIHGEPMIIHVWRRSVQAGLGPVVVACSEAEVFDAVHAHGGQAVMTDPDHPSGSDRVWEAVRKLDPEGRFDAIVNVQGDLPTLDPQIIRAVFAPLAEPGVDVATLVTEITNEEERTNPNVVKAVVGLRPGQRVGRALYFSRATVPANAGPHYHHIGLYAYRRDSLERFVSLPQGVLESREKLEQLRALENGMRIDCALVDTVPLGVDTPADLERARALLKA</sequence>
<evidence type="ECO:0000255" key="1">
    <source>
        <dbReference type="HAMAP-Rule" id="MF_00057"/>
    </source>
</evidence>
<gene>
    <name evidence="1" type="primary">kdsB</name>
    <name type="ordered locus">amb4168</name>
</gene>
<protein>
    <recommendedName>
        <fullName evidence="1">3-deoxy-manno-octulosonate cytidylyltransferase</fullName>
        <ecNumber evidence="1">2.7.7.38</ecNumber>
    </recommendedName>
    <alternativeName>
        <fullName evidence="1">CMP-2-keto-3-deoxyoctulosonic acid synthase</fullName>
        <shortName evidence="1">CKS</shortName>
        <shortName evidence="1">CMP-KDO synthase</shortName>
    </alternativeName>
</protein>
<comment type="function">
    <text evidence="1">Activates KDO (a required 8-carbon sugar) for incorporation into bacterial lipopolysaccharide in Gram-negative bacteria.</text>
</comment>
<comment type="catalytic activity">
    <reaction evidence="1">
        <text>3-deoxy-alpha-D-manno-oct-2-ulosonate + CTP = CMP-3-deoxy-beta-D-manno-octulosonate + diphosphate</text>
        <dbReference type="Rhea" id="RHEA:23448"/>
        <dbReference type="ChEBI" id="CHEBI:33019"/>
        <dbReference type="ChEBI" id="CHEBI:37563"/>
        <dbReference type="ChEBI" id="CHEBI:85986"/>
        <dbReference type="ChEBI" id="CHEBI:85987"/>
        <dbReference type="EC" id="2.7.7.38"/>
    </reaction>
</comment>
<comment type="pathway">
    <text evidence="1">Nucleotide-sugar biosynthesis; CMP-3-deoxy-D-manno-octulosonate biosynthesis; CMP-3-deoxy-D-manno-octulosonate from 3-deoxy-D-manno-octulosonate and CTP: step 1/1.</text>
</comment>
<comment type="pathway">
    <text evidence="1">Bacterial outer membrane biogenesis; lipopolysaccharide biosynthesis.</text>
</comment>
<comment type="subcellular location">
    <subcellularLocation>
        <location evidence="1">Cytoplasm</location>
    </subcellularLocation>
</comment>
<comment type="similarity">
    <text evidence="1">Belongs to the KdsB family.</text>
</comment>
<reference key="1">
    <citation type="journal article" date="2005" name="DNA Res.">
        <title>Complete genome sequence of the facultative anaerobic magnetotactic bacterium Magnetospirillum sp. strain AMB-1.</title>
        <authorList>
            <person name="Matsunaga T."/>
            <person name="Okamura Y."/>
            <person name="Fukuda Y."/>
            <person name="Wahyudi A.T."/>
            <person name="Murase Y."/>
            <person name="Takeyama H."/>
        </authorList>
    </citation>
    <scope>NUCLEOTIDE SEQUENCE [LARGE SCALE GENOMIC DNA]</scope>
    <source>
        <strain>ATCC 700264 / AMB-1</strain>
    </source>
</reference>